<proteinExistence type="inferred from homology"/>
<organism>
    <name type="scientific">Drosophila willistoni</name>
    <name type="common">Fruit fly</name>
    <dbReference type="NCBI Taxonomy" id="7260"/>
    <lineage>
        <taxon>Eukaryota</taxon>
        <taxon>Metazoa</taxon>
        <taxon>Ecdysozoa</taxon>
        <taxon>Arthropoda</taxon>
        <taxon>Hexapoda</taxon>
        <taxon>Insecta</taxon>
        <taxon>Pterygota</taxon>
        <taxon>Neoptera</taxon>
        <taxon>Endopterygota</taxon>
        <taxon>Diptera</taxon>
        <taxon>Brachycera</taxon>
        <taxon>Muscomorpha</taxon>
        <taxon>Ephydroidea</taxon>
        <taxon>Drosophilidae</taxon>
        <taxon>Drosophila</taxon>
        <taxon>Sophophora</taxon>
    </lineage>
</organism>
<gene>
    <name evidence="2" type="primary">ohgt</name>
    <name evidence="2" type="synonym">crbn</name>
    <name type="ORF">GK12054</name>
</gene>
<name>CRBN_DROWI</name>
<accession>B4N8G7</accession>
<feature type="chain" id="PRO_0000393888" description="Protein cereblon">
    <location>
        <begin position="1"/>
        <end position="612"/>
    </location>
</feature>
<feature type="domain" description="Lon N-terminal" evidence="3">
    <location>
        <begin position="250"/>
        <end position="478"/>
    </location>
</feature>
<feature type="domain" description="CULT" evidence="4">
    <location>
        <begin position="477"/>
        <end position="586"/>
    </location>
</feature>
<feature type="region of interest" description="Disordered" evidence="5">
    <location>
        <begin position="1"/>
        <end position="30"/>
    </location>
</feature>
<feature type="region of interest" description="Disordered" evidence="5">
    <location>
        <begin position="58"/>
        <end position="133"/>
    </location>
</feature>
<feature type="region of interest" description="Disordered" evidence="5">
    <location>
        <begin position="181"/>
        <end position="211"/>
    </location>
</feature>
<feature type="compositionally biased region" description="Acidic residues" evidence="5">
    <location>
        <begin position="1"/>
        <end position="11"/>
    </location>
</feature>
<feature type="compositionally biased region" description="Low complexity" evidence="5">
    <location>
        <begin position="69"/>
        <end position="81"/>
    </location>
</feature>
<feature type="compositionally biased region" description="Basic and acidic residues" evidence="5">
    <location>
        <begin position="181"/>
        <end position="190"/>
    </location>
</feature>
<feature type="binding site" evidence="4">
    <location>
        <position position="482"/>
    </location>
    <ligand>
        <name>Zn(2+)</name>
        <dbReference type="ChEBI" id="CHEBI:29105"/>
    </ligand>
</feature>
<feature type="binding site" evidence="4">
    <location>
        <position position="485"/>
    </location>
    <ligand>
        <name>Zn(2+)</name>
        <dbReference type="ChEBI" id="CHEBI:29105"/>
    </ligand>
</feature>
<feature type="binding site" evidence="4">
    <location>
        <position position="551"/>
    </location>
    <ligand>
        <name>Zn(2+)</name>
        <dbReference type="ChEBI" id="CHEBI:29105"/>
    </ligand>
</feature>
<feature type="binding site" evidence="4">
    <location>
        <position position="554"/>
    </location>
    <ligand>
        <name>Zn(2+)</name>
        <dbReference type="ChEBI" id="CHEBI:29105"/>
    </ligand>
</feature>
<keyword id="KW-0479">Metal-binding</keyword>
<keyword id="KW-0539">Nucleus</keyword>
<keyword id="KW-1185">Reference proteome</keyword>
<keyword id="KW-0832">Ubl conjugation</keyword>
<keyword id="KW-0833">Ubl conjugation pathway</keyword>
<keyword id="KW-0862">Zinc</keyword>
<sequence length="612" mass="68797">MDDEETAEIEDVNVLVPATGGEGPVDGASAMGAVQETENVNEESEAQREEDVVRDYMMELIRQSDEQLAADAPDAAASTGSDGSGDDDEQPNQNEEVGAGSGEQEDEAASHDSDMSLDSPGSEDDSVVWNPHPPGWMIPPNRLHSAVDMMVTQARNSDAGIAGLLSRHHFLQRIRSIVFSQERRRSRTSEEGEASSEPPHTPPPPRSPYDVEMEEGIRFDTNLAAEHSYFGNNSSRVPGVDYLEEGSTHHMLIFLHQHILFPGEVLPFMIDGSLIDEEMQQNGLDGLIFAVGFPLMQPPEDCPNRLYGVTCQIYEKGESGRQLVFYKSRALQRIVINCDDIQGLPQYIARNPTNKCYSKVKILPEYFLPEPLKCIDMGSMSRFRDIPSMRNMYQRYQITSTPWPLDACLEYSYTDIVEKARKKLEIHKIDTMPKCPIQLSFWLVRNLHLTEKLMRSTFLTDSVNTRLQIIGSTLKDESVFYCRYCNSSLAYCSDLFAMSKHGVQTQYCNSAGYIHETNTVYRVMTHAIGYSGEPTTEFSWFPGYQWHIILCKFCAQHVGWEFKAVQPNLTPKLFFGLAGSSVRIGKLVENTPVNGSTFVVRNLLRMVSSEME</sequence>
<evidence type="ECO:0000250" key="1">
    <source>
        <dbReference type="UniProtKB" id="Q96SW2"/>
    </source>
</evidence>
<evidence type="ECO:0000250" key="2">
    <source>
        <dbReference type="UniProtKB" id="Q9VH36"/>
    </source>
</evidence>
<evidence type="ECO:0000255" key="3">
    <source>
        <dbReference type="PROSITE-ProRule" id="PRU01123"/>
    </source>
</evidence>
<evidence type="ECO:0000255" key="4">
    <source>
        <dbReference type="PROSITE-ProRule" id="PRU01124"/>
    </source>
</evidence>
<evidence type="ECO:0000256" key="5">
    <source>
        <dbReference type="SAM" id="MobiDB-lite"/>
    </source>
</evidence>
<evidence type="ECO:0000305" key="6"/>
<comment type="function">
    <text evidence="2">Substrate recognition component of a DCX (DDB1-CUL4-X-box) E3 protein ligase complex that mediates the ubiquitination and subsequent proteasomal degradation of target proteins. Has an essential role in mediating growth by negatively regulating insulin signaling. It also has a role in maintaining presynaptic function in the neuromuscular junction synapses of third-instar larvae.</text>
</comment>
<comment type="pathway">
    <text evidence="1">Protein modification; protein ubiquitination.</text>
</comment>
<comment type="subunit">
    <text evidence="1 2">Likely a component of a DCX (DDB1-CUL4-X-box) protein ligase complex (By similarity). May interact with pic/DDB1 (By similarity).</text>
</comment>
<comment type="subcellular location">
    <subcellularLocation>
        <location evidence="2">Nucleus</location>
    </subcellularLocation>
</comment>
<comment type="PTM">
    <text evidence="2">Ubiquitinated.</text>
</comment>
<comment type="similarity">
    <text evidence="6">Belongs to the CRBN family.</text>
</comment>
<reference key="1">
    <citation type="journal article" date="2007" name="Nature">
        <title>Evolution of genes and genomes on the Drosophila phylogeny.</title>
        <authorList>
            <consortium name="Drosophila 12 genomes consortium"/>
        </authorList>
    </citation>
    <scope>NUCLEOTIDE SEQUENCE [LARGE SCALE GENOMIC DNA]</scope>
    <source>
        <strain>Tucson 14030-0811.24</strain>
    </source>
</reference>
<dbReference type="EMBL" id="CH964232">
    <property type="protein sequence ID" value="EDW81418.1"/>
    <property type="molecule type" value="Genomic_DNA"/>
</dbReference>
<dbReference type="SMR" id="B4N8G7"/>
<dbReference type="STRING" id="7260.B4N8G7"/>
<dbReference type="EnsemblMetazoa" id="FBtr0242705">
    <property type="protein sequence ID" value="FBpp0241197"/>
    <property type="gene ID" value="FBgn0214065"/>
</dbReference>
<dbReference type="EnsemblMetazoa" id="XM_002070396.4">
    <property type="protein sequence ID" value="XP_002070432.1"/>
    <property type="gene ID" value="LOC6646980"/>
</dbReference>
<dbReference type="GeneID" id="6646980"/>
<dbReference type="KEGG" id="dwi:6646980"/>
<dbReference type="CTD" id="41230"/>
<dbReference type="eggNOG" id="KOG1400">
    <property type="taxonomic scope" value="Eukaryota"/>
</dbReference>
<dbReference type="HOGENOM" id="CLU_028769_0_0_1"/>
<dbReference type="OMA" id="SMRDKYQ"/>
<dbReference type="OrthoDB" id="267517at2759"/>
<dbReference type="PhylomeDB" id="B4N8G7"/>
<dbReference type="UniPathway" id="UPA00143"/>
<dbReference type="Proteomes" id="UP000007798">
    <property type="component" value="Unassembled WGS sequence"/>
</dbReference>
<dbReference type="GO" id="GO:0005634">
    <property type="term" value="C:nucleus"/>
    <property type="evidence" value="ECO:0007669"/>
    <property type="project" value="UniProtKB-SubCell"/>
</dbReference>
<dbReference type="GO" id="GO:0046872">
    <property type="term" value="F:metal ion binding"/>
    <property type="evidence" value="ECO:0007669"/>
    <property type="project" value="UniProtKB-KW"/>
</dbReference>
<dbReference type="GO" id="GO:0016567">
    <property type="term" value="P:protein ubiquitination"/>
    <property type="evidence" value="ECO:0007669"/>
    <property type="project" value="UniProtKB-UniPathway"/>
</dbReference>
<dbReference type="CDD" id="cd15777">
    <property type="entry name" value="CRBN_C_like"/>
    <property type="match status" value="1"/>
</dbReference>
<dbReference type="FunFam" id="2.170.150.20:FF:000005">
    <property type="entry name" value="Blast:Protein cereblon homolog"/>
    <property type="match status" value="1"/>
</dbReference>
<dbReference type="Gene3D" id="1.20.58.1480">
    <property type="match status" value="1"/>
</dbReference>
<dbReference type="Gene3D" id="2.170.150.20">
    <property type="entry name" value="Peptide methionine sulfoxide reductase"/>
    <property type="match status" value="1"/>
</dbReference>
<dbReference type="InterPro" id="IPR034750">
    <property type="entry name" value="CULT"/>
</dbReference>
<dbReference type="InterPro" id="IPR003111">
    <property type="entry name" value="Lon_prtase_N"/>
</dbReference>
<dbReference type="InterPro" id="IPR004910">
    <property type="entry name" value="Yippee/Mis18/Cereblon"/>
</dbReference>
<dbReference type="Pfam" id="PF03226">
    <property type="entry name" value="Yippee-Mis18"/>
    <property type="match status" value="1"/>
</dbReference>
<dbReference type="PROSITE" id="PS51788">
    <property type="entry name" value="CULT"/>
    <property type="match status" value="1"/>
</dbReference>
<dbReference type="PROSITE" id="PS51787">
    <property type="entry name" value="LON_N"/>
    <property type="match status" value="1"/>
</dbReference>
<protein>
    <recommendedName>
        <fullName evidence="2">Protein cereblon</fullName>
    </recommendedName>
    <alternativeName>
        <fullName evidence="2">Protein ohgata</fullName>
    </alternativeName>
</protein>